<name>SUCC_NITWN</name>
<evidence type="ECO:0000255" key="1">
    <source>
        <dbReference type="HAMAP-Rule" id="MF_00558"/>
    </source>
</evidence>
<reference key="1">
    <citation type="journal article" date="2006" name="Appl. Environ. Microbiol.">
        <title>Genome sequence of the chemolithoautotrophic nitrite-oxidizing bacterium Nitrobacter winogradskyi Nb-255.</title>
        <authorList>
            <person name="Starkenburg S.R."/>
            <person name="Chain P.S.G."/>
            <person name="Sayavedra-Soto L.A."/>
            <person name="Hauser L."/>
            <person name="Land M.L."/>
            <person name="Larimer F.W."/>
            <person name="Malfatti S.A."/>
            <person name="Klotz M.G."/>
            <person name="Bottomley P.J."/>
            <person name="Arp D.J."/>
            <person name="Hickey W.J."/>
        </authorList>
    </citation>
    <scope>NUCLEOTIDE SEQUENCE [LARGE SCALE GENOMIC DNA]</scope>
    <source>
        <strain>ATCC 25391 / DSM 10237 / CIP 104748 / NCIMB 11846 / Nb-255</strain>
    </source>
</reference>
<proteinExistence type="inferred from homology"/>
<comment type="function">
    <text evidence="1">Succinyl-CoA synthetase functions in the citric acid cycle (TCA), coupling the hydrolysis of succinyl-CoA to the synthesis of either ATP or GTP and thus represents the only step of substrate-level phosphorylation in the TCA. The beta subunit provides nucleotide specificity of the enzyme and binds the substrate succinate, while the binding sites for coenzyme A and phosphate are found in the alpha subunit.</text>
</comment>
<comment type="catalytic activity">
    <reaction evidence="1">
        <text>succinate + ATP + CoA = succinyl-CoA + ADP + phosphate</text>
        <dbReference type="Rhea" id="RHEA:17661"/>
        <dbReference type="ChEBI" id="CHEBI:30031"/>
        <dbReference type="ChEBI" id="CHEBI:30616"/>
        <dbReference type="ChEBI" id="CHEBI:43474"/>
        <dbReference type="ChEBI" id="CHEBI:57287"/>
        <dbReference type="ChEBI" id="CHEBI:57292"/>
        <dbReference type="ChEBI" id="CHEBI:456216"/>
        <dbReference type="EC" id="6.2.1.5"/>
    </reaction>
    <physiologicalReaction direction="right-to-left" evidence="1">
        <dbReference type="Rhea" id="RHEA:17663"/>
    </physiologicalReaction>
</comment>
<comment type="catalytic activity">
    <reaction evidence="1">
        <text>GTP + succinate + CoA = succinyl-CoA + GDP + phosphate</text>
        <dbReference type="Rhea" id="RHEA:22120"/>
        <dbReference type="ChEBI" id="CHEBI:30031"/>
        <dbReference type="ChEBI" id="CHEBI:37565"/>
        <dbReference type="ChEBI" id="CHEBI:43474"/>
        <dbReference type="ChEBI" id="CHEBI:57287"/>
        <dbReference type="ChEBI" id="CHEBI:57292"/>
        <dbReference type="ChEBI" id="CHEBI:58189"/>
    </reaction>
    <physiologicalReaction direction="right-to-left" evidence="1">
        <dbReference type="Rhea" id="RHEA:22122"/>
    </physiologicalReaction>
</comment>
<comment type="cofactor">
    <cofactor evidence="1">
        <name>Mg(2+)</name>
        <dbReference type="ChEBI" id="CHEBI:18420"/>
    </cofactor>
    <text evidence="1">Binds 1 Mg(2+) ion per subunit.</text>
</comment>
<comment type="pathway">
    <text evidence="1">Carbohydrate metabolism; tricarboxylic acid cycle; succinate from succinyl-CoA (ligase route): step 1/1.</text>
</comment>
<comment type="subunit">
    <text evidence="1">Heterotetramer of two alpha and two beta subunits.</text>
</comment>
<comment type="similarity">
    <text evidence="1">Belongs to the succinate/malate CoA ligase beta subunit family.</text>
</comment>
<keyword id="KW-0067">ATP-binding</keyword>
<keyword id="KW-0436">Ligase</keyword>
<keyword id="KW-0460">Magnesium</keyword>
<keyword id="KW-0479">Metal-binding</keyword>
<keyword id="KW-0547">Nucleotide-binding</keyword>
<keyword id="KW-1185">Reference proteome</keyword>
<keyword id="KW-0816">Tricarboxylic acid cycle</keyword>
<dbReference type="EC" id="6.2.1.5" evidence="1"/>
<dbReference type="EMBL" id="CP000115">
    <property type="protein sequence ID" value="ABA03687.1"/>
    <property type="molecule type" value="Genomic_DNA"/>
</dbReference>
<dbReference type="RefSeq" id="WP_011313751.1">
    <property type="nucleotide sequence ID" value="NC_007406.1"/>
</dbReference>
<dbReference type="SMR" id="Q3SVK4"/>
<dbReference type="STRING" id="323098.Nwi_0420"/>
<dbReference type="KEGG" id="nwi:Nwi_0420"/>
<dbReference type="eggNOG" id="COG0045">
    <property type="taxonomic scope" value="Bacteria"/>
</dbReference>
<dbReference type="HOGENOM" id="CLU_037430_0_2_5"/>
<dbReference type="OrthoDB" id="9802602at2"/>
<dbReference type="UniPathway" id="UPA00223">
    <property type="reaction ID" value="UER00999"/>
</dbReference>
<dbReference type="Proteomes" id="UP000002531">
    <property type="component" value="Chromosome"/>
</dbReference>
<dbReference type="GO" id="GO:0005829">
    <property type="term" value="C:cytosol"/>
    <property type="evidence" value="ECO:0007669"/>
    <property type="project" value="TreeGrafter"/>
</dbReference>
<dbReference type="GO" id="GO:0042709">
    <property type="term" value="C:succinate-CoA ligase complex"/>
    <property type="evidence" value="ECO:0007669"/>
    <property type="project" value="TreeGrafter"/>
</dbReference>
<dbReference type="GO" id="GO:0005524">
    <property type="term" value="F:ATP binding"/>
    <property type="evidence" value="ECO:0007669"/>
    <property type="project" value="UniProtKB-UniRule"/>
</dbReference>
<dbReference type="GO" id="GO:0000287">
    <property type="term" value="F:magnesium ion binding"/>
    <property type="evidence" value="ECO:0007669"/>
    <property type="project" value="UniProtKB-UniRule"/>
</dbReference>
<dbReference type="GO" id="GO:0004775">
    <property type="term" value="F:succinate-CoA ligase (ADP-forming) activity"/>
    <property type="evidence" value="ECO:0007669"/>
    <property type="project" value="UniProtKB-UniRule"/>
</dbReference>
<dbReference type="GO" id="GO:0004776">
    <property type="term" value="F:succinate-CoA ligase (GDP-forming) activity"/>
    <property type="evidence" value="ECO:0007669"/>
    <property type="project" value="RHEA"/>
</dbReference>
<dbReference type="GO" id="GO:0006104">
    <property type="term" value="P:succinyl-CoA metabolic process"/>
    <property type="evidence" value="ECO:0007669"/>
    <property type="project" value="TreeGrafter"/>
</dbReference>
<dbReference type="GO" id="GO:0006099">
    <property type="term" value="P:tricarboxylic acid cycle"/>
    <property type="evidence" value="ECO:0007669"/>
    <property type="project" value="UniProtKB-UniRule"/>
</dbReference>
<dbReference type="FunFam" id="3.30.1490.20:FF:000002">
    <property type="entry name" value="Succinate--CoA ligase [ADP-forming] subunit beta"/>
    <property type="match status" value="1"/>
</dbReference>
<dbReference type="FunFam" id="3.30.470.20:FF:000002">
    <property type="entry name" value="Succinate--CoA ligase [ADP-forming] subunit beta"/>
    <property type="match status" value="1"/>
</dbReference>
<dbReference type="FunFam" id="3.40.50.261:FF:000001">
    <property type="entry name" value="Succinate--CoA ligase [ADP-forming] subunit beta"/>
    <property type="match status" value="1"/>
</dbReference>
<dbReference type="Gene3D" id="3.30.1490.20">
    <property type="entry name" value="ATP-grasp fold, A domain"/>
    <property type="match status" value="1"/>
</dbReference>
<dbReference type="Gene3D" id="3.30.470.20">
    <property type="entry name" value="ATP-grasp fold, B domain"/>
    <property type="match status" value="1"/>
</dbReference>
<dbReference type="Gene3D" id="3.40.50.261">
    <property type="entry name" value="Succinyl-CoA synthetase domains"/>
    <property type="match status" value="1"/>
</dbReference>
<dbReference type="HAMAP" id="MF_00558">
    <property type="entry name" value="Succ_CoA_beta"/>
    <property type="match status" value="1"/>
</dbReference>
<dbReference type="InterPro" id="IPR011761">
    <property type="entry name" value="ATP-grasp"/>
</dbReference>
<dbReference type="InterPro" id="IPR013650">
    <property type="entry name" value="ATP-grasp_succ-CoA_synth-type"/>
</dbReference>
<dbReference type="InterPro" id="IPR013815">
    <property type="entry name" value="ATP_grasp_subdomain_1"/>
</dbReference>
<dbReference type="InterPro" id="IPR005811">
    <property type="entry name" value="SUCC_ACL_C"/>
</dbReference>
<dbReference type="InterPro" id="IPR005809">
    <property type="entry name" value="Succ_CoA_ligase-like_bsu"/>
</dbReference>
<dbReference type="InterPro" id="IPR016102">
    <property type="entry name" value="Succinyl-CoA_synth-like"/>
</dbReference>
<dbReference type="NCBIfam" id="NF001913">
    <property type="entry name" value="PRK00696.1"/>
    <property type="match status" value="1"/>
</dbReference>
<dbReference type="NCBIfam" id="TIGR01016">
    <property type="entry name" value="sucCoAbeta"/>
    <property type="match status" value="1"/>
</dbReference>
<dbReference type="PANTHER" id="PTHR11815:SF10">
    <property type="entry name" value="SUCCINATE--COA LIGASE [GDP-FORMING] SUBUNIT BETA, MITOCHONDRIAL"/>
    <property type="match status" value="1"/>
</dbReference>
<dbReference type="PANTHER" id="PTHR11815">
    <property type="entry name" value="SUCCINYL-COA SYNTHETASE BETA CHAIN"/>
    <property type="match status" value="1"/>
</dbReference>
<dbReference type="Pfam" id="PF08442">
    <property type="entry name" value="ATP-grasp_2"/>
    <property type="match status" value="1"/>
</dbReference>
<dbReference type="Pfam" id="PF00549">
    <property type="entry name" value="Ligase_CoA"/>
    <property type="match status" value="1"/>
</dbReference>
<dbReference type="PIRSF" id="PIRSF001554">
    <property type="entry name" value="SucCS_beta"/>
    <property type="match status" value="1"/>
</dbReference>
<dbReference type="SUPFAM" id="SSF56059">
    <property type="entry name" value="Glutathione synthetase ATP-binding domain-like"/>
    <property type="match status" value="1"/>
</dbReference>
<dbReference type="SUPFAM" id="SSF52210">
    <property type="entry name" value="Succinyl-CoA synthetase domains"/>
    <property type="match status" value="1"/>
</dbReference>
<dbReference type="PROSITE" id="PS50975">
    <property type="entry name" value="ATP_GRASP"/>
    <property type="match status" value="1"/>
</dbReference>
<organism>
    <name type="scientific">Nitrobacter winogradskyi (strain ATCC 25391 / DSM 10237 / CIP 104748 / NCIMB 11846 / Nb-255)</name>
    <dbReference type="NCBI Taxonomy" id="323098"/>
    <lineage>
        <taxon>Bacteria</taxon>
        <taxon>Pseudomonadati</taxon>
        <taxon>Pseudomonadota</taxon>
        <taxon>Alphaproteobacteria</taxon>
        <taxon>Hyphomicrobiales</taxon>
        <taxon>Nitrobacteraceae</taxon>
        <taxon>Nitrobacter</taxon>
    </lineage>
</organism>
<gene>
    <name evidence="1" type="primary">sucC</name>
    <name type="ordered locus">Nwi_0420</name>
</gene>
<feature type="chain" id="PRO_1000082143" description="Succinate--CoA ligase [ADP-forming] subunit beta">
    <location>
        <begin position="1"/>
        <end position="399"/>
    </location>
</feature>
<feature type="domain" description="ATP-grasp" evidence="1">
    <location>
        <begin position="9"/>
        <end position="254"/>
    </location>
</feature>
<feature type="binding site" evidence="1">
    <location>
        <position position="46"/>
    </location>
    <ligand>
        <name>ATP</name>
        <dbReference type="ChEBI" id="CHEBI:30616"/>
    </ligand>
</feature>
<feature type="binding site" evidence="1">
    <location>
        <begin position="53"/>
        <end position="55"/>
    </location>
    <ligand>
        <name>ATP</name>
        <dbReference type="ChEBI" id="CHEBI:30616"/>
    </ligand>
</feature>
<feature type="binding site" evidence="1">
    <location>
        <position position="109"/>
    </location>
    <ligand>
        <name>ATP</name>
        <dbReference type="ChEBI" id="CHEBI:30616"/>
    </ligand>
</feature>
<feature type="binding site" evidence="1">
    <location>
        <position position="112"/>
    </location>
    <ligand>
        <name>ATP</name>
        <dbReference type="ChEBI" id="CHEBI:30616"/>
    </ligand>
</feature>
<feature type="binding site" evidence="1">
    <location>
        <position position="117"/>
    </location>
    <ligand>
        <name>ATP</name>
        <dbReference type="ChEBI" id="CHEBI:30616"/>
    </ligand>
</feature>
<feature type="binding site" evidence="1">
    <location>
        <position position="209"/>
    </location>
    <ligand>
        <name>Mg(2+)</name>
        <dbReference type="ChEBI" id="CHEBI:18420"/>
    </ligand>
</feature>
<feature type="binding site" evidence="1">
    <location>
        <position position="223"/>
    </location>
    <ligand>
        <name>Mg(2+)</name>
        <dbReference type="ChEBI" id="CHEBI:18420"/>
    </ligand>
</feature>
<feature type="binding site" evidence="1">
    <location>
        <position position="274"/>
    </location>
    <ligand>
        <name>substrate</name>
        <note>ligand shared with subunit alpha</note>
    </ligand>
</feature>
<feature type="binding site" evidence="1">
    <location>
        <begin position="331"/>
        <end position="333"/>
    </location>
    <ligand>
        <name>substrate</name>
        <note>ligand shared with subunit alpha</note>
    </ligand>
</feature>
<accession>Q3SVK4</accession>
<protein>
    <recommendedName>
        <fullName evidence="1">Succinate--CoA ligase [ADP-forming] subunit beta</fullName>
        <ecNumber evidence="1">6.2.1.5</ecNumber>
    </recommendedName>
    <alternativeName>
        <fullName evidence="1">Succinyl-CoA synthetase subunit beta</fullName>
        <shortName evidence="1">SCS-beta</shortName>
    </alternativeName>
</protein>
<sequence length="399" mass="42536">MNIHEYQAKALLREFGVPVSRGVPVLQASEAEAAAETLGGPVWVVKSQIHAGGRGKGKFKEASAGEKGGVRLARSIDEVKTFAGQMLGATLVTAQTGPAGKQVNRLYIEEGSDIDKEFYFSALVDRETSRISFVVSTEGGMNIEEVAHKTPEKIVTFSVDPATGVMSHHGRTVARALRLRGDLGKQAEKLVTQLYDAFIARDMAMLEINPLVVTKQGELRVLDAKISFDSNALYRHSDVVALRDESEEDAKEIEASRFDLSYVALDGQIGCMVNGAGLAMATMDIIKLYGMAPANFLDVGGGATKDKVAAAFKIITADPNVKGILINIFGGIMKCDVIADGVVAAVKQVGLNVPLVVRLEGTNVDAGKKIIRESGLNVLPADDLDDAAQKIVKAVKEVA</sequence>